<organism>
    <name type="scientific">Mycobacterium bovis (strain BCG / Tokyo 172 / ATCC 35737 / TMC 1019)</name>
    <dbReference type="NCBI Taxonomy" id="561275"/>
    <lineage>
        <taxon>Bacteria</taxon>
        <taxon>Bacillati</taxon>
        <taxon>Actinomycetota</taxon>
        <taxon>Actinomycetes</taxon>
        <taxon>Mycobacteriales</taxon>
        <taxon>Mycobacteriaceae</taxon>
        <taxon>Mycobacterium</taxon>
        <taxon>Mycobacterium tuberculosis complex</taxon>
    </lineage>
</organism>
<comment type="function">
    <text evidence="1">Involved in the biosynthesis of ADP-glucose, a building block, required in the biosynthesis of maltose-1-phosphate (M1P) and in the elongation reactions to produce linear alpha-1,4-glucans. Catalyzes the reaction between ATP and alpha-D-glucose 1-phosphate (G1P) to produce pyrophosphate and ADP-Glc.</text>
</comment>
<comment type="catalytic activity">
    <reaction evidence="1">
        <text>alpha-D-glucose 1-phosphate + ATP + H(+) = ADP-alpha-D-glucose + diphosphate</text>
        <dbReference type="Rhea" id="RHEA:12120"/>
        <dbReference type="ChEBI" id="CHEBI:15378"/>
        <dbReference type="ChEBI" id="CHEBI:30616"/>
        <dbReference type="ChEBI" id="CHEBI:33019"/>
        <dbReference type="ChEBI" id="CHEBI:57498"/>
        <dbReference type="ChEBI" id="CHEBI:58601"/>
        <dbReference type="EC" id="2.7.7.27"/>
    </reaction>
</comment>
<comment type="pathway">
    <text evidence="2">Capsule biogenesis; capsule polysaccharide biosynthesis.</text>
</comment>
<comment type="pathway">
    <text evidence="1">Glycan biosynthesis; glycogen biosynthesis.</text>
</comment>
<comment type="similarity">
    <text evidence="1">Belongs to the bacterial/plant glucose-1-phosphate adenylyltransferase family.</text>
</comment>
<name>GLGC_MYCBT</name>
<keyword id="KW-0067">ATP-binding</keyword>
<keyword id="KW-0119">Carbohydrate metabolism</keyword>
<keyword id="KW-0320">Glycogen biosynthesis</keyword>
<keyword id="KW-0321">Glycogen metabolism</keyword>
<keyword id="KW-0547">Nucleotide-binding</keyword>
<keyword id="KW-0548">Nucleotidyltransferase</keyword>
<keyword id="KW-0808">Transferase</keyword>
<accession>C1AMK7</accession>
<proteinExistence type="inferred from homology"/>
<evidence type="ECO:0000255" key="1">
    <source>
        <dbReference type="HAMAP-Rule" id="MF_00624"/>
    </source>
</evidence>
<evidence type="ECO:0000305" key="2"/>
<feature type="chain" id="PRO_1000147229" description="Glucose-1-phosphate adenylyltransferase">
    <location>
        <begin position="1"/>
        <end position="404"/>
    </location>
</feature>
<feature type="binding site" evidence="1">
    <location>
        <position position="99"/>
    </location>
    <ligand>
        <name>alpha-D-glucose 1-phosphate</name>
        <dbReference type="ChEBI" id="CHEBI:58601"/>
    </ligand>
</feature>
<feature type="binding site" evidence="1">
    <location>
        <position position="164"/>
    </location>
    <ligand>
        <name>alpha-D-glucose 1-phosphate</name>
        <dbReference type="ChEBI" id="CHEBI:58601"/>
    </ligand>
</feature>
<feature type="binding site" evidence="1">
    <location>
        <begin position="179"/>
        <end position="180"/>
    </location>
    <ligand>
        <name>alpha-D-glucose 1-phosphate</name>
        <dbReference type="ChEBI" id="CHEBI:58601"/>
    </ligand>
</feature>
<feature type="binding site" evidence="1">
    <location>
        <position position="197"/>
    </location>
    <ligand>
        <name>alpha-D-glucose 1-phosphate</name>
        <dbReference type="ChEBI" id="CHEBI:58601"/>
    </ligand>
</feature>
<reference key="1">
    <citation type="journal article" date="2009" name="Vaccine">
        <title>Whole genome sequence analysis of Mycobacterium bovis bacillus Calmette-Guerin (BCG) Tokyo 172: a comparative study of BCG vaccine substrains.</title>
        <authorList>
            <person name="Seki M."/>
            <person name="Honda I."/>
            <person name="Fujita I."/>
            <person name="Yano I."/>
            <person name="Yamamoto S."/>
            <person name="Koyama A."/>
        </authorList>
    </citation>
    <scope>NUCLEOTIDE SEQUENCE [LARGE SCALE GENOMIC DNA]</scope>
    <source>
        <strain>BCG / Tokyo 172 / ATCC 35737 / TMC 1019</strain>
    </source>
</reference>
<protein>
    <recommendedName>
        <fullName evidence="1">Glucose-1-phosphate adenylyltransferase</fullName>
        <ecNumber evidence="1">2.7.7.27</ecNumber>
    </recommendedName>
    <alternativeName>
        <fullName evidence="1">ADP-glucose pyrophosphorylase</fullName>
        <shortName evidence="1">ADPGlc PPase</shortName>
    </alternativeName>
    <alternativeName>
        <fullName evidence="1">ADP-glucose synthase</fullName>
    </alternativeName>
</protein>
<gene>
    <name evidence="1" type="primary">glgC</name>
    <name type="ordered locus">JTY_1248</name>
</gene>
<sequence length="404" mass="43800">MREVPHVLGIVLAGGEGKRLYPLTADRAKPAVPFGGAYRLIDFVLSNLVNARYLRICVLTQYKSHSLDRHISQNWRLSGLAGEYITPVPAQQRLGPRWYTGSADAIYQSLNLIYDEDPDYIVVFGADHVYRMDPEQMVRFHIDSGAGATVAGIRVPRENATAFGCIDADDSGRIRSFVEKPLEPPGTPDDPDTTFVSMGNYIFTTKVLIDAIRADADDDHSDHDMGGDIVPRLVADGMAAVYDFSDNEVPGATDRDRAYWRDVGTLDAFYDAHMDLVSVHPVFNLYNKRWPIRGESENLAPAKFVNGGSAQESVVGAGSIISAASVRNSVLSSNVVVDDGAIVEGSVIMPGTRVGRGAVVRHAILDKNVVVGPGEMVGVDLEKDRERFAISAGGVVAVGKGVWI</sequence>
<dbReference type="EC" id="2.7.7.27" evidence="1"/>
<dbReference type="EMBL" id="AP010918">
    <property type="protein sequence ID" value="BAH25536.1"/>
    <property type="molecule type" value="Genomic_DNA"/>
</dbReference>
<dbReference type="RefSeq" id="WP_003406249.1">
    <property type="nucleotide sequence ID" value="NZ_CP014566.1"/>
</dbReference>
<dbReference type="SMR" id="C1AMK7"/>
<dbReference type="GeneID" id="45425183"/>
<dbReference type="KEGG" id="mbt:JTY_1248"/>
<dbReference type="HOGENOM" id="CLU_029499_14_1_11"/>
<dbReference type="UniPathway" id="UPA00164"/>
<dbReference type="UniPathway" id="UPA00934"/>
<dbReference type="GO" id="GO:0005524">
    <property type="term" value="F:ATP binding"/>
    <property type="evidence" value="ECO:0007669"/>
    <property type="project" value="UniProtKB-KW"/>
</dbReference>
<dbReference type="GO" id="GO:0008878">
    <property type="term" value="F:glucose-1-phosphate adenylyltransferase activity"/>
    <property type="evidence" value="ECO:0007669"/>
    <property type="project" value="UniProtKB-UniRule"/>
</dbReference>
<dbReference type="GO" id="GO:0045227">
    <property type="term" value="P:capsule polysaccharide biosynthetic process"/>
    <property type="evidence" value="ECO:0007669"/>
    <property type="project" value="UniProtKB-UniPathway"/>
</dbReference>
<dbReference type="GO" id="GO:0005978">
    <property type="term" value="P:glycogen biosynthetic process"/>
    <property type="evidence" value="ECO:0007669"/>
    <property type="project" value="UniProtKB-UniRule"/>
</dbReference>
<dbReference type="CDD" id="cd02508">
    <property type="entry name" value="ADP_Glucose_PP"/>
    <property type="match status" value="1"/>
</dbReference>
<dbReference type="CDD" id="cd04651">
    <property type="entry name" value="LbH_G1P_AT_C"/>
    <property type="match status" value="1"/>
</dbReference>
<dbReference type="FunFam" id="2.160.10.10:FF:000020">
    <property type="entry name" value="Glucose-1-phosphate adenylyltransferase"/>
    <property type="match status" value="1"/>
</dbReference>
<dbReference type="FunFam" id="3.90.550.10:FF:000014">
    <property type="entry name" value="Glucose-1-phosphate adenylyltransferase"/>
    <property type="match status" value="1"/>
</dbReference>
<dbReference type="Gene3D" id="2.160.10.10">
    <property type="entry name" value="Hexapeptide repeat proteins"/>
    <property type="match status" value="1"/>
</dbReference>
<dbReference type="Gene3D" id="3.90.550.10">
    <property type="entry name" value="Spore Coat Polysaccharide Biosynthesis Protein SpsA, Chain A"/>
    <property type="match status" value="1"/>
</dbReference>
<dbReference type="HAMAP" id="MF_00624">
    <property type="entry name" value="GlgC"/>
    <property type="match status" value="1"/>
</dbReference>
<dbReference type="InterPro" id="IPR011831">
    <property type="entry name" value="ADP-Glc_PPase"/>
</dbReference>
<dbReference type="InterPro" id="IPR005836">
    <property type="entry name" value="ADP_Glu_pyroP_CS"/>
</dbReference>
<dbReference type="InterPro" id="IPR023049">
    <property type="entry name" value="GlgC_bac"/>
</dbReference>
<dbReference type="InterPro" id="IPR056818">
    <property type="entry name" value="GlmU/GlgC-like_hexapep"/>
</dbReference>
<dbReference type="InterPro" id="IPR005835">
    <property type="entry name" value="NTP_transferase_dom"/>
</dbReference>
<dbReference type="InterPro" id="IPR029044">
    <property type="entry name" value="Nucleotide-diphossugar_trans"/>
</dbReference>
<dbReference type="InterPro" id="IPR011004">
    <property type="entry name" value="Trimer_LpxA-like_sf"/>
</dbReference>
<dbReference type="NCBIfam" id="TIGR02091">
    <property type="entry name" value="glgC"/>
    <property type="match status" value="1"/>
</dbReference>
<dbReference type="NCBIfam" id="NF001947">
    <property type="entry name" value="PRK00725.1"/>
    <property type="match status" value="1"/>
</dbReference>
<dbReference type="NCBIfam" id="NF002023">
    <property type="entry name" value="PRK00844.1"/>
    <property type="match status" value="1"/>
</dbReference>
<dbReference type="PANTHER" id="PTHR43523:SF2">
    <property type="entry name" value="GLUCOSE-1-PHOSPHATE ADENYLYLTRANSFERASE"/>
    <property type="match status" value="1"/>
</dbReference>
<dbReference type="PANTHER" id="PTHR43523">
    <property type="entry name" value="GLUCOSE-1-PHOSPHATE ADENYLYLTRANSFERASE-RELATED"/>
    <property type="match status" value="1"/>
</dbReference>
<dbReference type="Pfam" id="PF24894">
    <property type="entry name" value="Hexapep_GlmU"/>
    <property type="match status" value="1"/>
</dbReference>
<dbReference type="Pfam" id="PF00483">
    <property type="entry name" value="NTP_transferase"/>
    <property type="match status" value="1"/>
</dbReference>
<dbReference type="SUPFAM" id="SSF53448">
    <property type="entry name" value="Nucleotide-diphospho-sugar transferases"/>
    <property type="match status" value="1"/>
</dbReference>
<dbReference type="SUPFAM" id="SSF51161">
    <property type="entry name" value="Trimeric LpxA-like enzymes"/>
    <property type="match status" value="1"/>
</dbReference>
<dbReference type="PROSITE" id="PS00808">
    <property type="entry name" value="ADP_GLC_PYROPHOSPH_1"/>
    <property type="match status" value="1"/>
</dbReference>
<dbReference type="PROSITE" id="PS00809">
    <property type="entry name" value="ADP_GLC_PYROPHOSPH_2"/>
    <property type="match status" value="1"/>
</dbReference>
<dbReference type="PROSITE" id="PS00810">
    <property type="entry name" value="ADP_GLC_PYROPHOSPH_3"/>
    <property type="match status" value="1"/>
</dbReference>